<gene>
    <name evidence="1" type="primary">ppaC</name>
    <name type="ordered locus">SPN23F14970</name>
</gene>
<keyword id="KW-0963">Cytoplasm</keyword>
<keyword id="KW-0378">Hydrolase</keyword>
<keyword id="KW-0464">Manganese</keyword>
<keyword id="KW-0479">Metal-binding</keyword>
<proteinExistence type="inferred from homology"/>
<dbReference type="EC" id="3.6.1.1" evidence="1"/>
<dbReference type="EMBL" id="FM211187">
    <property type="protein sequence ID" value="CAR69279.1"/>
    <property type="molecule type" value="Genomic_DNA"/>
</dbReference>
<dbReference type="RefSeq" id="WP_000036043.1">
    <property type="nucleotide sequence ID" value="NC_011900.1"/>
</dbReference>
<dbReference type="SMR" id="B8ZLD4"/>
<dbReference type="KEGG" id="sne:SPN23F14970"/>
<dbReference type="HOGENOM" id="CLU_025243_0_1_9"/>
<dbReference type="GO" id="GO:0005737">
    <property type="term" value="C:cytoplasm"/>
    <property type="evidence" value="ECO:0007669"/>
    <property type="project" value="UniProtKB-SubCell"/>
</dbReference>
<dbReference type="GO" id="GO:0004427">
    <property type="term" value="F:inorganic diphosphate phosphatase activity"/>
    <property type="evidence" value="ECO:0007669"/>
    <property type="project" value="UniProtKB-UniRule"/>
</dbReference>
<dbReference type="GO" id="GO:0030145">
    <property type="term" value="F:manganese ion binding"/>
    <property type="evidence" value="ECO:0007669"/>
    <property type="project" value="UniProtKB-UniRule"/>
</dbReference>
<dbReference type="FunFam" id="3.10.310.20:FF:000001">
    <property type="entry name" value="Probable manganese-dependent inorganic pyrophosphatase"/>
    <property type="match status" value="1"/>
</dbReference>
<dbReference type="FunFam" id="3.90.1640.10:FF:000001">
    <property type="entry name" value="Probable manganese-dependent inorganic pyrophosphatase"/>
    <property type="match status" value="1"/>
</dbReference>
<dbReference type="Gene3D" id="3.10.310.20">
    <property type="entry name" value="DHHA2 domain"/>
    <property type="match status" value="1"/>
</dbReference>
<dbReference type="Gene3D" id="3.90.1640.10">
    <property type="entry name" value="inorganic pyrophosphatase (n-terminal core)"/>
    <property type="match status" value="1"/>
</dbReference>
<dbReference type="HAMAP" id="MF_00207">
    <property type="entry name" value="PPase_C"/>
    <property type="match status" value="1"/>
</dbReference>
<dbReference type="InterPro" id="IPR001667">
    <property type="entry name" value="DDH_dom"/>
</dbReference>
<dbReference type="InterPro" id="IPR038763">
    <property type="entry name" value="DHH_sf"/>
</dbReference>
<dbReference type="InterPro" id="IPR004097">
    <property type="entry name" value="DHHA2"/>
</dbReference>
<dbReference type="InterPro" id="IPR038222">
    <property type="entry name" value="DHHA2_dom_sf"/>
</dbReference>
<dbReference type="InterPro" id="IPR022934">
    <property type="entry name" value="Mn-dep_inorganic_PyrPase"/>
</dbReference>
<dbReference type="InterPro" id="IPR051319">
    <property type="entry name" value="Oligoribo/pAp-PDE_c-di-AMP_PDE"/>
</dbReference>
<dbReference type="NCBIfam" id="NF003877">
    <property type="entry name" value="PRK05427.1"/>
    <property type="match status" value="1"/>
</dbReference>
<dbReference type="PANTHER" id="PTHR47618">
    <property type="entry name" value="BIFUNCTIONAL OLIGORIBONUCLEASE AND PAP PHOSPHATASE NRNA"/>
    <property type="match status" value="1"/>
</dbReference>
<dbReference type="PANTHER" id="PTHR47618:SF1">
    <property type="entry name" value="BIFUNCTIONAL OLIGORIBONUCLEASE AND PAP PHOSPHATASE NRNA"/>
    <property type="match status" value="1"/>
</dbReference>
<dbReference type="Pfam" id="PF01368">
    <property type="entry name" value="DHH"/>
    <property type="match status" value="1"/>
</dbReference>
<dbReference type="Pfam" id="PF02833">
    <property type="entry name" value="DHHA2"/>
    <property type="match status" value="1"/>
</dbReference>
<dbReference type="SMART" id="SM01131">
    <property type="entry name" value="DHHA2"/>
    <property type="match status" value="1"/>
</dbReference>
<dbReference type="SUPFAM" id="SSF64182">
    <property type="entry name" value="DHH phosphoesterases"/>
    <property type="match status" value="1"/>
</dbReference>
<accession>B8ZLD4</accession>
<sequence>MSKILVFGHQNPDSDAIGSSVAFAYLAKEAYGLDTEAVALGTPNEETAFVLNYFGVEAPRVITSAKAEGAEQVILTDHNEFQQSVSDIAEVEVYGVVDHHRVANFETASPLYMRLEPVGSASSIVYRMFKEHGVAVPKEIAGLMLSGLISDTLLLKSPTTHPTDKIIAPELAELAGVNLEEYGLAMLKAGTNLASKSAEELIDIDAKTFELNGNNVRVAQVNTVDIAEVLERQAEIEAAMQAANESNGYSDFVLMITDIVNSNSEILALGANMDKVEAAFNFKLENNHAFLAGAVSRKKQVVPQLTESFNA</sequence>
<protein>
    <recommendedName>
        <fullName evidence="1">Probable manganese-dependent inorganic pyrophosphatase</fullName>
        <ecNumber evidence="1">3.6.1.1</ecNumber>
    </recommendedName>
    <alternativeName>
        <fullName evidence="1">Pyrophosphate phospho-hydrolase</fullName>
        <shortName evidence="1">PPase</shortName>
    </alternativeName>
</protein>
<reference key="1">
    <citation type="journal article" date="2009" name="J. Bacteriol.">
        <title>Role of conjugative elements in the evolution of the multidrug-resistant pandemic clone Streptococcus pneumoniae Spain23F ST81.</title>
        <authorList>
            <person name="Croucher N.J."/>
            <person name="Walker D."/>
            <person name="Romero P."/>
            <person name="Lennard N."/>
            <person name="Paterson G.K."/>
            <person name="Bason N.C."/>
            <person name="Mitchell A.M."/>
            <person name="Quail M.A."/>
            <person name="Andrew P.W."/>
            <person name="Parkhill J."/>
            <person name="Bentley S.D."/>
            <person name="Mitchell T.J."/>
        </authorList>
    </citation>
    <scope>NUCLEOTIDE SEQUENCE [LARGE SCALE GENOMIC DNA]</scope>
    <source>
        <strain>ATCC 700669 / Spain 23F-1</strain>
    </source>
</reference>
<evidence type="ECO:0000255" key="1">
    <source>
        <dbReference type="HAMAP-Rule" id="MF_00207"/>
    </source>
</evidence>
<organism>
    <name type="scientific">Streptococcus pneumoniae (strain ATCC 700669 / Spain 23F-1)</name>
    <dbReference type="NCBI Taxonomy" id="561276"/>
    <lineage>
        <taxon>Bacteria</taxon>
        <taxon>Bacillati</taxon>
        <taxon>Bacillota</taxon>
        <taxon>Bacilli</taxon>
        <taxon>Lactobacillales</taxon>
        <taxon>Streptococcaceae</taxon>
        <taxon>Streptococcus</taxon>
    </lineage>
</organism>
<name>PPAC_STRPJ</name>
<comment type="catalytic activity">
    <reaction evidence="1">
        <text>diphosphate + H2O = 2 phosphate + H(+)</text>
        <dbReference type="Rhea" id="RHEA:24576"/>
        <dbReference type="ChEBI" id="CHEBI:15377"/>
        <dbReference type="ChEBI" id="CHEBI:15378"/>
        <dbReference type="ChEBI" id="CHEBI:33019"/>
        <dbReference type="ChEBI" id="CHEBI:43474"/>
        <dbReference type="EC" id="3.6.1.1"/>
    </reaction>
</comment>
<comment type="cofactor">
    <cofactor evidence="1">
        <name>Mn(2+)</name>
        <dbReference type="ChEBI" id="CHEBI:29035"/>
    </cofactor>
    <text evidence="1">Binds 2 manganese ions per subunit.</text>
</comment>
<comment type="subcellular location">
    <subcellularLocation>
        <location evidence="1">Cytoplasm</location>
    </subcellularLocation>
</comment>
<comment type="similarity">
    <text evidence="1">Belongs to the PPase class C family.</text>
</comment>
<feature type="chain" id="PRO_1000124660" description="Probable manganese-dependent inorganic pyrophosphatase">
    <location>
        <begin position="1"/>
        <end position="311"/>
    </location>
</feature>
<feature type="binding site" evidence="1">
    <location>
        <position position="9"/>
    </location>
    <ligand>
        <name>Mn(2+)</name>
        <dbReference type="ChEBI" id="CHEBI:29035"/>
        <label>1</label>
    </ligand>
</feature>
<feature type="binding site" evidence="1">
    <location>
        <position position="13"/>
    </location>
    <ligand>
        <name>Mn(2+)</name>
        <dbReference type="ChEBI" id="CHEBI:29035"/>
        <label>1</label>
    </ligand>
</feature>
<feature type="binding site" evidence="1">
    <location>
        <position position="15"/>
    </location>
    <ligand>
        <name>Mn(2+)</name>
        <dbReference type="ChEBI" id="CHEBI:29035"/>
        <label>2</label>
    </ligand>
</feature>
<feature type="binding site" evidence="1">
    <location>
        <position position="77"/>
    </location>
    <ligand>
        <name>Mn(2+)</name>
        <dbReference type="ChEBI" id="CHEBI:29035"/>
        <label>1</label>
    </ligand>
</feature>
<feature type="binding site" evidence="1">
    <location>
        <position position="77"/>
    </location>
    <ligand>
        <name>Mn(2+)</name>
        <dbReference type="ChEBI" id="CHEBI:29035"/>
        <label>2</label>
    </ligand>
</feature>
<feature type="binding site" evidence="1">
    <location>
        <position position="99"/>
    </location>
    <ligand>
        <name>Mn(2+)</name>
        <dbReference type="ChEBI" id="CHEBI:29035"/>
        <label>2</label>
    </ligand>
</feature>
<feature type="binding site" evidence="1">
    <location>
        <position position="151"/>
    </location>
    <ligand>
        <name>Mn(2+)</name>
        <dbReference type="ChEBI" id="CHEBI:29035"/>
        <label>2</label>
    </ligand>
</feature>